<reference key="1">
    <citation type="submission" date="2006-10" db="EMBL/GenBank/DDBJ databases">
        <authorList>
            <consortium name="NIH - Xenopus Gene Collection (XGC) project"/>
        </authorList>
    </citation>
    <scope>NUCLEOTIDE SEQUENCE [LARGE SCALE MRNA]</scope>
    <source>
        <tissue>Ovary</tissue>
    </source>
</reference>
<proteinExistence type="evidence at transcript level"/>
<feature type="chain" id="PRO_0000313737" description="Interleukin-1 receptor-associated kinase 1-binding protein 1 homolog">
    <location>
        <begin position="1"/>
        <end position="245"/>
    </location>
</feature>
<gene>
    <name type="primary">irak1bp1</name>
</gene>
<keyword id="KW-0963">Cytoplasm</keyword>
<keyword id="KW-0539">Nucleus</keyword>
<keyword id="KW-1185">Reference proteome</keyword>
<protein>
    <recommendedName>
        <fullName>Interleukin-1 receptor-associated kinase 1-binding protein 1 homolog</fullName>
    </recommendedName>
</protein>
<organism>
    <name type="scientific">Xenopus laevis</name>
    <name type="common">African clawed frog</name>
    <dbReference type="NCBI Taxonomy" id="8355"/>
    <lineage>
        <taxon>Eukaryota</taxon>
        <taxon>Metazoa</taxon>
        <taxon>Chordata</taxon>
        <taxon>Craniata</taxon>
        <taxon>Vertebrata</taxon>
        <taxon>Euteleostomi</taxon>
        <taxon>Amphibia</taxon>
        <taxon>Batrachia</taxon>
        <taxon>Anura</taxon>
        <taxon>Pipoidea</taxon>
        <taxon>Pipidae</taxon>
        <taxon>Xenopodinae</taxon>
        <taxon>Xenopus</taxon>
        <taxon>Xenopus</taxon>
    </lineage>
</organism>
<evidence type="ECO:0000250" key="1"/>
<evidence type="ECO:0000305" key="2"/>
<comment type="function">
    <text evidence="1">May be part of a signaling pathway that leads to NF-kappa-B activation.</text>
</comment>
<comment type="subcellular location">
    <subcellularLocation>
        <location evidence="1">Cytoplasm</location>
    </subcellularLocation>
    <subcellularLocation>
        <location evidence="1">Nucleus</location>
    </subcellularLocation>
</comment>
<comment type="similarity">
    <text evidence="2">Belongs to the IRAK1BP1 family.</text>
</comment>
<name>IKBP1_XENLA</name>
<accession>Q08AV8</accession>
<dbReference type="EMBL" id="BC124989">
    <property type="protein sequence ID" value="AAI24990.1"/>
    <property type="molecule type" value="mRNA"/>
</dbReference>
<dbReference type="RefSeq" id="NP_001121320.1">
    <property type="nucleotide sequence ID" value="NM_001127848.1"/>
</dbReference>
<dbReference type="SMR" id="Q08AV8"/>
<dbReference type="DNASU" id="100158405"/>
<dbReference type="GeneID" id="100158405"/>
<dbReference type="KEGG" id="xla:100158405"/>
<dbReference type="AGR" id="Xenbase:XB-GENE-960911"/>
<dbReference type="CTD" id="100158405"/>
<dbReference type="Xenbase" id="XB-GENE-960911">
    <property type="gene designation" value="irak1bp1.S"/>
</dbReference>
<dbReference type="OMA" id="TQTATRE"/>
<dbReference type="OrthoDB" id="6365554at2759"/>
<dbReference type="Proteomes" id="UP000186698">
    <property type="component" value="Chromosome 5S"/>
</dbReference>
<dbReference type="Bgee" id="100158405">
    <property type="expression patterns" value="Expressed in testis and 19 other cell types or tissues"/>
</dbReference>
<dbReference type="GO" id="GO:0005737">
    <property type="term" value="C:cytoplasm"/>
    <property type="evidence" value="ECO:0007669"/>
    <property type="project" value="UniProtKB-SubCell"/>
</dbReference>
<dbReference type="GO" id="GO:0005634">
    <property type="term" value="C:nucleus"/>
    <property type="evidence" value="ECO:0007669"/>
    <property type="project" value="UniProtKB-SubCell"/>
</dbReference>
<dbReference type="GO" id="GO:0006955">
    <property type="term" value="P:immune response"/>
    <property type="evidence" value="ECO:0007669"/>
    <property type="project" value="InterPro"/>
</dbReference>
<dbReference type="GO" id="GO:0043123">
    <property type="term" value="P:positive regulation of canonical NF-kappaB signal transduction"/>
    <property type="evidence" value="ECO:0007669"/>
    <property type="project" value="InterPro"/>
</dbReference>
<dbReference type="FunFam" id="3.30.110.170:FF:000003">
    <property type="entry name" value="Interleukin-1 receptor-associated kinase 1-binding protein 1 homolog"/>
    <property type="match status" value="1"/>
</dbReference>
<dbReference type="Gene3D" id="3.30.110.170">
    <property type="entry name" value="Protein of unknown function (DUF541), domain 1"/>
    <property type="match status" value="1"/>
</dbReference>
<dbReference type="Gene3D" id="3.30.70.2970">
    <property type="entry name" value="Protein of unknown function (DUF541), domain 2"/>
    <property type="match status" value="1"/>
</dbReference>
<dbReference type="InterPro" id="IPR030312">
    <property type="entry name" value="IRAK1BP1"/>
</dbReference>
<dbReference type="InterPro" id="IPR007497">
    <property type="entry name" value="SIMPL/DUF541"/>
</dbReference>
<dbReference type="PANTHER" id="PTHR18842">
    <property type="entry name" value="INTERLEUKIN-1 RECEPTOR-ASSOCIATED KINASE 1-BINDING PROTEIN 1"/>
    <property type="match status" value="1"/>
</dbReference>
<dbReference type="PANTHER" id="PTHR18842:SF2">
    <property type="entry name" value="INTERLEUKIN-1 RECEPTOR-ASSOCIATED KINASE 1-BINDING PROTEIN 1"/>
    <property type="match status" value="1"/>
</dbReference>
<dbReference type="Pfam" id="PF04402">
    <property type="entry name" value="SIMPL"/>
    <property type="match status" value="1"/>
</dbReference>
<sequence length="245" mass="26808">MAATSPVSRIFASLQPANSSALHTGDLENRAGIVVGQHGGREVQVSGSAELSAAPDRAQVCIAVSSSKGTAAEAKSSVQRRLEYIAQSLRQGGVTEENITVSKEFQRLSNTYKMEAVVCVVFSDFDKLQSNCNLLVEKLDSSVNISPPHFYHTADCLEKLRREVCLGAVANARRKAQEVCRLVGHSLGKALIIREEELREWEDQAESSQAHQSIQSKIKTATIYAASKILATFEIKGKERHKKNR</sequence>